<sequence length="145" mass="15863">MIALIQRALSASVVVEGNIVGEIGPGLLVLLGVEQGDTEQKAQRLCERVLGYRIFSDENDKMNLNVQQAGGSVLVVSQFTLVADTQKGMRPSFSRGAIPQEADRLYQYFVAQCRERGVKTETGLFAADMKVSLVNDGPVTFWLQV</sequence>
<organism>
    <name type="scientific">Yersinia pestis</name>
    <dbReference type="NCBI Taxonomy" id="632"/>
    <lineage>
        <taxon>Bacteria</taxon>
        <taxon>Pseudomonadati</taxon>
        <taxon>Pseudomonadota</taxon>
        <taxon>Gammaproteobacteria</taxon>
        <taxon>Enterobacterales</taxon>
        <taxon>Yersiniaceae</taxon>
        <taxon>Yersinia</taxon>
    </lineage>
</organism>
<proteinExistence type="inferred from homology"/>
<reference key="1">
    <citation type="journal article" date="2001" name="Nature">
        <title>Genome sequence of Yersinia pestis, the causative agent of plague.</title>
        <authorList>
            <person name="Parkhill J."/>
            <person name="Wren B.W."/>
            <person name="Thomson N.R."/>
            <person name="Titball R.W."/>
            <person name="Holden M.T.G."/>
            <person name="Prentice M.B."/>
            <person name="Sebaihia M."/>
            <person name="James K.D."/>
            <person name="Churcher C.M."/>
            <person name="Mungall K.L."/>
            <person name="Baker S."/>
            <person name="Basham D."/>
            <person name="Bentley S.D."/>
            <person name="Brooks K."/>
            <person name="Cerdeno-Tarraga A.-M."/>
            <person name="Chillingworth T."/>
            <person name="Cronin A."/>
            <person name="Davies R.M."/>
            <person name="Davis P."/>
            <person name="Dougan G."/>
            <person name="Feltwell T."/>
            <person name="Hamlin N."/>
            <person name="Holroyd S."/>
            <person name="Jagels K."/>
            <person name="Karlyshev A.V."/>
            <person name="Leather S."/>
            <person name="Moule S."/>
            <person name="Oyston P.C.F."/>
            <person name="Quail M.A."/>
            <person name="Rutherford K.M."/>
            <person name="Simmonds M."/>
            <person name="Skelton J."/>
            <person name="Stevens K."/>
            <person name="Whitehead S."/>
            <person name="Barrell B.G."/>
        </authorList>
    </citation>
    <scope>NUCLEOTIDE SEQUENCE [LARGE SCALE GENOMIC DNA]</scope>
    <source>
        <strain>CO-92 / Biovar Orientalis</strain>
    </source>
</reference>
<reference key="2">
    <citation type="journal article" date="2002" name="J. Bacteriol.">
        <title>Genome sequence of Yersinia pestis KIM.</title>
        <authorList>
            <person name="Deng W."/>
            <person name="Burland V."/>
            <person name="Plunkett G. III"/>
            <person name="Boutin A."/>
            <person name="Mayhew G.F."/>
            <person name="Liss P."/>
            <person name="Perna N.T."/>
            <person name="Rose D.J."/>
            <person name="Mau B."/>
            <person name="Zhou S."/>
            <person name="Schwartz D.C."/>
            <person name="Fetherston J.D."/>
            <person name="Lindler L.E."/>
            <person name="Brubaker R.R."/>
            <person name="Plano G.V."/>
            <person name="Straley S.C."/>
            <person name="McDonough K.A."/>
            <person name="Nilles M.L."/>
            <person name="Matson J.S."/>
            <person name="Blattner F.R."/>
            <person name="Perry R.D."/>
        </authorList>
    </citation>
    <scope>NUCLEOTIDE SEQUENCE [LARGE SCALE GENOMIC DNA]</scope>
    <source>
        <strain>KIM10+ / Biovar Mediaevalis</strain>
    </source>
</reference>
<reference key="3">
    <citation type="journal article" date="2004" name="DNA Res.">
        <title>Complete genome sequence of Yersinia pestis strain 91001, an isolate avirulent to humans.</title>
        <authorList>
            <person name="Song Y."/>
            <person name="Tong Z."/>
            <person name="Wang J."/>
            <person name="Wang L."/>
            <person name="Guo Z."/>
            <person name="Han Y."/>
            <person name="Zhang J."/>
            <person name="Pei D."/>
            <person name="Zhou D."/>
            <person name="Qin H."/>
            <person name="Pang X."/>
            <person name="Han Y."/>
            <person name="Zhai J."/>
            <person name="Li M."/>
            <person name="Cui B."/>
            <person name="Qi Z."/>
            <person name="Jin L."/>
            <person name="Dai R."/>
            <person name="Chen F."/>
            <person name="Li S."/>
            <person name="Ye C."/>
            <person name="Du Z."/>
            <person name="Lin W."/>
            <person name="Wang J."/>
            <person name="Yu J."/>
            <person name="Yang H."/>
            <person name="Wang J."/>
            <person name="Huang P."/>
            <person name="Yang R."/>
        </authorList>
    </citation>
    <scope>NUCLEOTIDE SEQUENCE [LARGE SCALE GENOMIC DNA]</scope>
    <source>
        <strain>91001 / Biovar Mediaevalis</strain>
    </source>
</reference>
<comment type="function">
    <text evidence="1">An aminoacyl-tRNA editing enzyme that deacylates mischarged D-aminoacyl-tRNAs. Also deacylates mischarged glycyl-tRNA(Ala), protecting cells against glycine mischarging by AlaRS. Acts via tRNA-based rather than protein-based catalysis; rejects L-amino acids rather than detecting D-amino acids in the active site. By recycling D-aminoacyl-tRNA to D-amino acids and free tRNA molecules, this enzyme counteracts the toxicity associated with the formation of D-aminoacyl-tRNA entities in vivo and helps enforce protein L-homochirality.</text>
</comment>
<comment type="catalytic activity">
    <reaction evidence="1">
        <text>glycyl-tRNA(Ala) + H2O = tRNA(Ala) + glycine + H(+)</text>
        <dbReference type="Rhea" id="RHEA:53744"/>
        <dbReference type="Rhea" id="RHEA-COMP:9657"/>
        <dbReference type="Rhea" id="RHEA-COMP:13640"/>
        <dbReference type="ChEBI" id="CHEBI:15377"/>
        <dbReference type="ChEBI" id="CHEBI:15378"/>
        <dbReference type="ChEBI" id="CHEBI:57305"/>
        <dbReference type="ChEBI" id="CHEBI:78442"/>
        <dbReference type="ChEBI" id="CHEBI:78522"/>
        <dbReference type="EC" id="3.1.1.96"/>
    </reaction>
</comment>
<comment type="catalytic activity">
    <reaction evidence="1">
        <text>a D-aminoacyl-tRNA + H2O = a tRNA + a D-alpha-amino acid + H(+)</text>
        <dbReference type="Rhea" id="RHEA:13953"/>
        <dbReference type="Rhea" id="RHEA-COMP:10123"/>
        <dbReference type="Rhea" id="RHEA-COMP:10124"/>
        <dbReference type="ChEBI" id="CHEBI:15377"/>
        <dbReference type="ChEBI" id="CHEBI:15378"/>
        <dbReference type="ChEBI" id="CHEBI:59871"/>
        <dbReference type="ChEBI" id="CHEBI:78442"/>
        <dbReference type="ChEBI" id="CHEBI:79333"/>
        <dbReference type="EC" id="3.1.1.96"/>
    </reaction>
</comment>
<comment type="subunit">
    <text evidence="1">Homodimer.</text>
</comment>
<comment type="subcellular location">
    <subcellularLocation>
        <location evidence="1">Cytoplasm</location>
    </subcellularLocation>
</comment>
<comment type="domain">
    <text evidence="1">A Gly-cisPro motif from one monomer fits into the active site of the other monomer to allow specific chiral rejection of L-amino acids.</text>
</comment>
<comment type="similarity">
    <text evidence="1">Belongs to the DTD family.</text>
</comment>
<protein>
    <recommendedName>
        <fullName evidence="1">D-aminoacyl-tRNA deacylase</fullName>
        <shortName evidence="1">DTD</shortName>
        <ecNumber evidence="1">3.1.1.96</ecNumber>
    </recommendedName>
    <alternativeName>
        <fullName evidence="1">Gly-tRNA(Ala) deacylase</fullName>
    </alternativeName>
</protein>
<evidence type="ECO:0000255" key="1">
    <source>
        <dbReference type="HAMAP-Rule" id="MF_00518"/>
    </source>
</evidence>
<keyword id="KW-0963">Cytoplasm</keyword>
<keyword id="KW-0378">Hydrolase</keyword>
<keyword id="KW-1185">Reference proteome</keyword>
<keyword id="KW-0694">RNA-binding</keyword>
<keyword id="KW-0820">tRNA-binding</keyword>
<dbReference type="EC" id="3.1.1.96" evidence="1"/>
<dbReference type="EMBL" id="AL590842">
    <property type="protein sequence ID" value="CAL18719.1"/>
    <property type="molecule type" value="Genomic_DNA"/>
</dbReference>
<dbReference type="EMBL" id="AE009952">
    <property type="protein sequence ID" value="AAM87345.1"/>
    <property type="molecule type" value="Genomic_DNA"/>
</dbReference>
<dbReference type="EMBL" id="AE017042">
    <property type="protein sequence ID" value="AAS60311.1"/>
    <property type="molecule type" value="Genomic_DNA"/>
</dbReference>
<dbReference type="PIR" id="AF0004">
    <property type="entry name" value="AF0004"/>
</dbReference>
<dbReference type="RefSeq" id="WP_002209009.1">
    <property type="nucleotide sequence ID" value="NZ_WUCM01000104.1"/>
</dbReference>
<dbReference type="RefSeq" id="YP_002345125.1">
    <property type="nucleotide sequence ID" value="NC_003143.1"/>
</dbReference>
<dbReference type="SMR" id="P58534"/>
<dbReference type="STRING" id="214092.YPO0029"/>
<dbReference type="PaxDb" id="214092-YPO0029"/>
<dbReference type="DNASU" id="1148747"/>
<dbReference type="EnsemblBacteria" id="AAS60311">
    <property type="protein sequence ID" value="AAS60311"/>
    <property type="gene ID" value="YP_0030"/>
</dbReference>
<dbReference type="GeneID" id="57974561"/>
<dbReference type="KEGG" id="ype:YPO0029"/>
<dbReference type="KEGG" id="ypk:y3800"/>
<dbReference type="KEGG" id="ypm:YP_0030"/>
<dbReference type="PATRIC" id="fig|214092.21.peg.250"/>
<dbReference type="eggNOG" id="COG1490">
    <property type="taxonomic scope" value="Bacteria"/>
</dbReference>
<dbReference type="HOGENOM" id="CLU_076901_1_0_6"/>
<dbReference type="OMA" id="VFGADMK"/>
<dbReference type="OrthoDB" id="9801395at2"/>
<dbReference type="Proteomes" id="UP000000815">
    <property type="component" value="Chromosome"/>
</dbReference>
<dbReference type="Proteomes" id="UP000001019">
    <property type="component" value="Chromosome"/>
</dbReference>
<dbReference type="Proteomes" id="UP000002490">
    <property type="component" value="Chromosome"/>
</dbReference>
<dbReference type="GO" id="GO:0005737">
    <property type="term" value="C:cytoplasm"/>
    <property type="evidence" value="ECO:0000318"/>
    <property type="project" value="GO_Central"/>
</dbReference>
<dbReference type="GO" id="GO:0051500">
    <property type="term" value="F:D-tyrosyl-tRNA(Tyr) deacylase activity"/>
    <property type="evidence" value="ECO:0000318"/>
    <property type="project" value="GO_Central"/>
</dbReference>
<dbReference type="GO" id="GO:0106026">
    <property type="term" value="F:Gly-tRNA(Ala) deacylase activity"/>
    <property type="evidence" value="ECO:0007669"/>
    <property type="project" value="UniProtKB-UniRule"/>
</dbReference>
<dbReference type="GO" id="GO:0043908">
    <property type="term" value="F:Ser(Gly)-tRNA(Ala) hydrolase activity"/>
    <property type="evidence" value="ECO:0007669"/>
    <property type="project" value="UniProtKB-UniRule"/>
</dbReference>
<dbReference type="GO" id="GO:0000049">
    <property type="term" value="F:tRNA binding"/>
    <property type="evidence" value="ECO:0007669"/>
    <property type="project" value="UniProtKB-UniRule"/>
</dbReference>
<dbReference type="GO" id="GO:0019478">
    <property type="term" value="P:D-amino acid catabolic process"/>
    <property type="evidence" value="ECO:0007669"/>
    <property type="project" value="UniProtKB-UniRule"/>
</dbReference>
<dbReference type="GO" id="GO:0006399">
    <property type="term" value="P:tRNA metabolic process"/>
    <property type="evidence" value="ECO:0000318"/>
    <property type="project" value="GO_Central"/>
</dbReference>
<dbReference type="CDD" id="cd00563">
    <property type="entry name" value="Dtyr_deacylase"/>
    <property type="match status" value="1"/>
</dbReference>
<dbReference type="FunFam" id="3.50.80.10:FF:000001">
    <property type="entry name" value="D-aminoacyl-tRNA deacylase"/>
    <property type="match status" value="1"/>
</dbReference>
<dbReference type="Gene3D" id="3.50.80.10">
    <property type="entry name" value="D-tyrosyl-tRNA(Tyr) deacylase"/>
    <property type="match status" value="1"/>
</dbReference>
<dbReference type="HAMAP" id="MF_00518">
    <property type="entry name" value="Deacylase_Dtd"/>
    <property type="match status" value="1"/>
</dbReference>
<dbReference type="InterPro" id="IPR003732">
    <property type="entry name" value="Daa-tRNA_deacyls_DTD"/>
</dbReference>
<dbReference type="InterPro" id="IPR023509">
    <property type="entry name" value="DTD-like_sf"/>
</dbReference>
<dbReference type="NCBIfam" id="TIGR00256">
    <property type="entry name" value="D-aminoacyl-tRNA deacylase"/>
    <property type="match status" value="1"/>
</dbReference>
<dbReference type="PANTHER" id="PTHR10472:SF5">
    <property type="entry name" value="D-AMINOACYL-TRNA DEACYLASE 1"/>
    <property type="match status" value="1"/>
</dbReference>
<dbReference type="PANTHER" id="PTHR10472">
    <property type="entry name" value="D-TYROSYL-TRNA TYR DEACYLASE"/>
    <property type="match status" value="1"/>
</dbReference>
<dbReference type="Pfam" id="PF02580">
    <property type="entry name" value="Tyr_Deacylase"/>
    <property type="match status" value="1"/>
</dbReference>
<dbReference type="SUPFAM" id="SSF69500">
    <property type="entry name" value="DTD-like"/>
    <property type="match status" value="1"/>
</dbReference>
<name>DTD_YERPE</name>
<gene>
    <name evidence="1" type="primary">dtd</name>
    <name type="ordered locus">YPO0029</name>
    <name type="ordered locus">y3800</name>
    <name type="ordered locus">YP_0030</name>
</gene>
<accession>P58534</accession>
<accession>Q0WKR3</accession>
<feature type="chain" id="PRO_0000164623" description="D-aminoacyl-tRNA deacylase">
    <location>
        <begin position="1"/>
        <end position="145"/>
    </location>
</feature>
<feature type="short sequence motif" description="Gly-cisPro motif, important for rejection of L-amino acids" evidence="1">
    <location>
        <begin position="137"/>
        <end position="138"/>
    </location>
</feature>